<feature type="chain" id="PRO_0000147175" description="tRNA(Met) cytidine acetate ligase">
    <location>
        <begin position="1"/>
        <end position="299"/>
    </location>
</feature>
<feature type="binding site" evidence="1">
    <location>
        <begin position="6"/>
        <end position="19"/>
    </location>
    <ligand>
        <name>ATP</name>
        <dbReference type="ChEBI" id="CHEBI:30616"/>
    </ligand>
</feature>
<feature type="binding site" evidence="1">
    <location>
        <position position="100"/>
    </location>
    <ligand>
        <name>ATP</name>
        <dbReference type="ChEBI" id="CHEBI:30616"/>
    </ligand>
</feature>
<feature type="binding site" evidence="1">
    <location>
        <position position="157"/>
    </location>
    <ligand>
        <name>ATP</name>
        <dbReference type="ChEBI" id="CHEBI:30616"/>
    </ligand>
</feature>
<feature type="binding site" evidence="1">
    <location>
        <position position="182"/>
    </location>
    <ligand>
        <name>ATP</name>
        <dbReference type="ChEBI" id="CHEBI:30616"/>
    </ligand>
</feature>
<keyword id="KW-0067">ATP-binding</keyword>
<keyword id="KW-0963">Cytoplasm</keyword>
<keyword id="KW-0436">Ligase</keyword>
<keyword id="KW-0547">Nucleotide-binding</keyword>
<keyword id="KW-1185">Reference proteome</keyword>
<keyword id="KW-0694">RNA-binding</keyword>
<keyword id="KW-0819">tRNA processing</keyword>
<keyword id="KW-0820">tRNA-binding</keyword>
<gene>
    <name evidence="1" type="primary">tmcAL</name>
    <name type="ordered locus">MMOB3550</name>
</gene>
<dbReference type="EC" id="6.3.4.-" evidence="1"/>
<dbReference type="EMBL" id="AE017308">
    <property type="protein sequence ID" value="AAT27841.1"/>
    <property type="status" value="ALT_INIT"/>
    <property type="molecule type" value="Genomic_DNA"/>
</dbReference>
<dbReference type="RefSeq" id="WP_041362883.1">
    <property type="nucleotide sequence ID" value="NC_006908.1"/>
</dbReference>
<dbReference type="SMR" id="Q6KHT7"/>
<dbReference type="STRING" id="267748.MMOB3550"/>
<dbReference type="KEGG" id="mmo:MMOB3550"/>
<dbReference type="eggNOG" id="COG1323">
    <property type="taxonomic scope" value="Bacteria"/>
</dbReference>
<dbReference type="HOGENOM" id="CLU_038915_1_0_14"/>
<dbReference type="OrthoDB" id="9769796at2"/>
<dbReference type="Proteomes" id="UP000009072">
    <property type="component" value="Chromosome"/>
</dbReference>
<dbReference type="GO" id="GO:0005737">
    <property type="term" value="C:cytoplasm"/>
    <property type="evidence" value="ECO:0007669"/>
    <property type="project" value="UniProtKB-SubCell"/>
</dbReference>
<dbReference type="GO" id="GO:0005524">
    <property type="term" value="F:ATP binding"/>
    <property type="evidence" value="ECO:0007669"/>
    <property type="project" value="UniProtKB-KW"/>
</dbReference>
<dbReference type="GO" id="GO:0016879">
    <property type="term" value="F:ligase activity, forming carbon-nitrogen bonds"/>
    <property type="evidence" value="ECO:0007669"/>
    <property type="project" value="UniProtKB-UniRule"/>
</dbReference>
<dbReference type="GO" id="GO:0000049">
    <property type="term" value="F:tRNA binding"/>
    <property type="evidence" value="ECO:0007669"/>
    <property type="project" value="UniProtKB-KW"/>
</dbReference>
<dbReference type="GO" id="GO:0006400">
    <property type="term" value="P:tRNA modification"/>
    <property type="evidence" value="ECO:0007669"/>
    <property type="project" value="UniProtKB-UniRule"/>
</dbReference>
<dbReference type="Gene3D" id="3.40.50.620">
    <property type="entry name" value="HUPs"/>
    <property type="match status" value="1"/>
</dbReference>
<dbReference type="HAMAP" id="MF_01539">
    <property type="entry name" value="TmcAL"/>
    <property type="match status" value="1"/>
</dbReference>
<dbReference type="InterPro" id="IPR014729">
    <property type="entry name" value="Rossmann-like_a/b/a_fold"/>
</dbReference>
<dbReference type="InterPro" id="IPR008513">
    <property type="entry name" value="tRNA(Met)_cyd_acetate_ligase"/>
</dbReference>
<dbReference type="NCBIfam" id="NF010192">
    <property type="entry name" value="PRK13671.1"/>
    <property type="match status" value="1"/>
</dbReference>
<dbReference type="PANTHER" id="PTHR37825">
    <property type="entry name" value="TRNA(MET) CYTIDINE ACETATE LIGASE"/>
    <property type="match status" value="1"/>
</dbReference>
<dbReference type="PANTHER" id="PTHR37825:SF1">
    <property type="entry name" value="TRNA(MET) CYTIDINE ACETATE LIGASE"/>
    <property type="match status" value="1"/>
</dbReference>
<dbReference type="Pfam" id="PF05636">
    <property type="entry name" value="HIGH_NTase1"/>
    <property type="match status" value="1"/>
</dbReference>
<dbReference type="SUPFAM" id="SSF52374">
    <property type="entry name" value="Nucleotidylyl transferase"/>
    <property type="match status" value="1"/>
</dbReference>
<proteinExistence type="inferred from homology"/>
<evidence type="ECO:0000255" key="1">
    <source>
        <dbReference type="HAMAP-Rule" id="MF_01539"/>
    </source>
</evidence>
<evidence type="ECO:0000305" key="2"/>
<sequence length="299" mass="34670">MAIGIIAEYNPFHNGHIYMINYIKNKFPNEEIIVFMSGKYTQRGEIAVASFETRKKYVLEAGVSKVYELPFETSTQAAHIFAQGAIKMLYEYNVDKLIFGSETNDIDLFYKIANTLKNNEQEYNLKLKEFLKQGLGFPNASSLALKSLVGYEIVMPNDILGLEYVKAIVNNNYNIQAYCLKRTINFHSEFTLENFASASYLRTLIYKSEDISKYSPMIFETIPDRIENYYEEFKQKVISTSKEELAKISLISEGLENRFKKIVLEAQDYDSFVNKANSKRYTSSRIKRIMLYILLDIKK</sequence>
<protein>
    <recommendedName>
        <fullName evidence="1">tRNA(Met) cytidine acetate ligase</fullName>
        <ecNumber evidence="1">6.3.4.-</ecNumber>
    </recommendedName>
</protein>
<name>TMCAL_MYCM1</name>
<organism>
    <name type="scientific">Mycoplasma mobile (strain ATCC 43663 / 163K / NCTC 11711)</name>
    <name type="common">Mesomycoplasma mobile</name>
    <dbReference type="NCBI Taxonomy" id="267748"/>
    <lineage>
        <taxon>Bacteria</taxon>
        <taxon>Bacillati</taxon>
        <taxon>Mycoplasmatota</taxon>
        <taxon>Mycoplasmoidales</taxon>
        <taxon>Metamycoplasmataceae</taxon>
        <taxon>Mesomycoplasma</taxon>
    </lineage>
</organism>
<accession>Q6KHT7</accession>
<comment type="function">
    <text evidence="1">Catalyzes the formation of N(4)-acetylcytidine (ac(4)C) at the wobble position of elongator tRNA(Met), using acetate and ATP as substrates. First activates an acetate ion to form acetyladenylate (Ac-AMP) and then transfers the acetyl group to tRNA to form ac(4)C34.</text>
</comment>
<comment type="catalytic activity">
    <reaction evidence="1">
        <text>cytidine(34) in elongator tRNA(Met) + acetate + ATP = N(4)-acetylcytidine(34) in elongator tRNA(Met) + AMP + diphosphate</text>
        <dbReference type="Rhea" id="RHEA:58144"/>
        <dbReference type="Rhea" id="RHEA-COMP:10693"/>
        <dbReference type="Rhea" id="RHEA-COMP:10694"/>
        <dbReference type="ChEBI" id="CHEBI:30089"/>
        <dbReference type="ChEBI" id="CHEBI:30616"/>
        <dbReference type="ChEBI" id="CHEBI:33019"/>
        <dbReference type="ChEBI" id="CHEBI:74900"/>
        <dbReference type="ChEBI" id="CHEBI:82748"/>
        <dbReference type="ChEBI" id="CHEBI:456215"/>
    </reaction>
</comment>
<comment type="subcellular location">
    <subcellularLocation>
        <location evidence="1">Cytoplasm</location>
    </subcellularLocation>
</comment>
<comment type="similarity">
    <text evidence="1">Belongs to the TmcAL family.</text>
</comment>
<comment type="sequence caution" evidence="2">
    <conflict type="erroneous initiation">
        <sequence resource="EMBL-CDS" id="AAT27841"/>
    </conflict>
</comment>
<reference key="1">
    <citation type="journal article" date="2004" name="Genome Res.">
        <title>The complete genome and proteome of Mycoplasma mobile.</title>
        <authorList>
            <person name="Jaffe J.D."/>
            <person name="Stange-Thomann N."/>
            <person name="Smith C."/>
            <person name="DeCaprio D."/>
            <person name="Fisher S."/>
            <person name="Butler J."/>
            <person name="Calvo S."/>
            <person name="Elkins T."/>
            <person name="FitzGerald M.G."/>
            <person name="Hafez N."/>
            <person name="Kodira C.D."/>
            <person name="Major J."/>
            <person name="Wang S."/>
            <person name="Wilkinson J."/>
            <person name="Nicol R."/>
            <person name="Nusbaum C."/>
            <person name="Birren B."/>
            <person name="Berg H.C."/>
            <person name="Church G.M."/>
        </authorList>
    </citation>
    <scope>NUCLEOTIDE SEQUENCE [LARGE SCALE GENOMIC DNA]</scope>
    <source>
        <strain>ATCC 43663 / NCTC 11711 / 163 K</strain>
    </source>
</reference>